<organism>
    <name type="scientific">Mycobacterium tuberculosis (strain ATCC 25618 / H37Rv)</name>
    <dbReference type="NCBI Taxonomy" id="83332"/>
    <lineage>
        <taxon>Bacteria</taxon>
        <taxon>Bacillati</taxon>
        <taxon>Actinomycetota</taxon>
        <taxon>Actinomycetes</taxon>
        <taxon>Mycobacteriales</taxon>
        <taxon>Mycobacteriaceae</taxon>
        <taxon>Mycobacterium</taxon>
        <taxon>Mycobacterium tuberculosis complex</taxon>
    </lineage>
</organism>
<proteinExistence type="evidence at protein level"/>
<keyword id="KW-0342">GTP-binding</keyword>
<keyword id="KW-0378">Hydrolase</keyword>
<keyword id="KW-0456">Lyase</keyword>
<keyword id="KW-0460">Magnesium</keyword>
<keyword id="KW-0464">Manganese</keyword>
<keyword id="KW-0479">Metal-binding</keyword>
<keyword id="KW-0511">Multifunctional enzyme</keyword>
<keyword id="KW-0547">Nucleotide-binding</keyword>
<keyword id="KW-1185">Reference proteome</keyword>
<keyword id="KW-0686">Riboflavin biosynthesis</keyword>
<keyword id="KW-0862">Zinc</keyword>
<evidence type="ECO:0000255" key="1">
    <source>
        <dbReference type="HAMAP-Rule" id="MF_01283"/>
    </source>
</evidence>
<evidence type="ECO:0000305" key="2"/>
<gene>
    <name evidence="1" type="primary">ribBA</name>
    <name type="synonym">ribA</name>
    <name type="synonym">ribA2</name>
    <name type="ordered locus">Rv1415</name>
    <name type="ORF">MTCY21B4.33</name>
</gene>
<sequence length="425" mass="46017">MTRLDSVERAVADIAAGKAVIVIDDEDRENEGDLIFAAEKATPEMVAFMVRYTSGYLCVPLDGAICDRLGLLPMYAVNQDKHGTAYTVTVDARNGIGTGISASDRATTMRLLADPTSVADDFTRPGHVVPLRAKDGGVLRRPGHTEAAVDLARMAGLQPAGAICEIVSQKDEGSMAHTDELRVFADEHGLALITIADLIEWRRKHEKHIERVAEARIPTRHGEFRAIGYTSIYEDVEHVALVRGEIAGPNADGDDVLVRVHSECLTGDVFGSRRCDCGPQLDAALAMVAREGRGVVLYMRGHEGRGIGLMHKLQAYQLQDAGADTVDANLKLGLPADARDYGIGAQILVDLGVRSMRLLTNNPAKRVGLDGYGLHIIERVPLPVRANAENIRYLMTKRDKLGHDLAGLDDFHESVHLPGEFGGAL</sequence>
<comment type="function">
    <text evidence="1">Catalyzes the conversion of D-ribulose 5-phosphate to formate and 3,4-dihydroxy-2-butanone 4-phosphate.</text>
</comment>
<comment type="function">
    <text evidence="1">Catalyzes the conversion of GTP to 2,5-diamino-6-ribosylamino-4(3H)-pyrimidinone 5'-phosphate (DARP), formate and pyrophosphate.</text>
</comment>
<comment type="catalytic activity">
    <reaction evidence="1">
        <text>D-ribulose 5-phosphate = (2S)-2-hydroxy-3-oxobutyl phosphate + formate + H(+)</text>
        <dbReference type="Rhea" id="RHEA:18457"/>
        <dbReference type="ChEBI" id="CHEBI:15378"/>
        <dbReference type="ChEBI" id="CHEBI:15740"/>
        <dbReference type="ChEBI" id="CHEBI:58121"/>
        <dbReference type="ChEBI" id="CHEBI:58830"/>
        <dbReference type="EC" id="4.1.99.12"/>
    </reaction>
</comment>
<comment type="catalytic activity">
    <reaction evidence="1">
        <text>GTP + 4 H2O = 2,5-diamino-6-hydroxy-4-(5-phosphoribosylamino)-pyrimidine + formate + 2 phosphate + 3 H(+)</text>
        <dbReference type="Rhea" id="RHEA:23704"/>
        <dbReference type="ChEBI" id="CHEBI:15377"/>
        <dbReference type="ChEBI" id="CHEBI:15378"/>
        <dbReference type="ChEBI" id="CHEBI:15740"/>
        <dbReference type="ChEBI" id="CHEBI:37565"/>
        <dbReference type="ChEBI" id="CHEBI:43474"/>
        <dbReference type="ChEBI" id="CHEBI:58614"/>
        <dbReference type="EC" id="3.5.4.25"/>
    </reaction>
</comment>
<comment type="cofactor">
    <cofactor evidence="1">
        <name>Mg(2+)</name>
        <dbReference type="ChEBI" id="CHEBI:18420"/>
    </cofactor>
    <cofactor evidence="1">
        <name>Mn(2+)</name>
        <dbReference type="ChEBI" id="CHEBI:29035"/>
    </cofactor>
    <text evidence="1">Binds 2 divalent metal cations per subunit. Magnesium or manganese.</text>
</comment>
<comment type="cofactor">
    <cofactor evidence="1">
        <name>Zn(2+)</name>
        <dbReference type="ChEBI" id="CHEBI:29105"/>
    </cofactor>
    <text evidence="1">Binds 1 zinc ion per subunit.</text>
</comment>
<comment type="pathway">
    <text evidence="1">Cofactor biosynthesis; riboflavin biosynthesis; 2-hydroxy-3-oxobutyl phosphate from D-ribulose 5-phosphate: step 1/1.</text>
</comment>
<comment type="pathway">
    <text evidence="1">Cofactor biosynthesis; riboflavin biosynthesis; 5-amino-6-(D-ribitylamino)uracil from GTP: step 1/4.</text>
</comment>
<comment type="similarity">
    <text evidence="1">In the N-terminal section; belongs to the DHBP synthase family.</text>
</comment>
<comment type="similarity">
    <text evidence="1">In the C-terminal section; belongs to the GTP cyclohydrolase II family.</text>
</comment>
<accession>P9WHF1</accession>
<accession>L0T9B8</accession>
<accession>O07714</accession>
<accession>P0A5V0</accession>
<accession>P71684</accession>
<reference key="1">
    <citation type="submission" date="1997-05" db="EMBL/GenBank/DDBJ databases">
        <title>Isolation and characterization of a gene expressed by a virulent strain of Mycobacterium tuberculosis H37Rv that is not expressed by the less virulent H37Ra.</title>
        <authorList>
            <person name="Kikuta-Oshima L.C."/>
            <person name="King C.H."/>
            <person name="Shinnick T.M."/>
            <person name="Ribot E.M."/>
            <person name="Wagner P.A."/>
            <person name="Utt E.A."/>
            <person name="Quinn F.D."/>
        </authorList>
    </citation>
    <scope>NUCLEOTIDE SEQUENCE [GENOMIC DNA]</scope>
    <source>
        <strain>ATCC 25618 / H37Rv</strain>
    </source>
</reference>
<reference key="2">
    <citation type="journal article" date="1998" name="Nature">
        <title>Deciphering the biology of Mycobacterium tuberculosis from the complete genome sequence.</title>
        <authorList>
            <person name="Cole S.T."/>
            <person name="Brosch R."/>
            <person name="Parkhill J."/>
            <person name="Garnier T."/>
            <person name="Churcher C.M."/>
            <person name="Harris D.E."/>
            <person name="Gordon S.V."/>
            <person name="Eiglmeier K."/>
            <person name="Gas S."/>
            <person name="Barry C.E. III"/>
            <person name="Tekaia F."/>
            <person name="Badcock K."/>
            <person name="Basham D."/>
            <person name="Brown D."/>
            <person name="Chillingworth T."/>
            <person name="Connor R."/>
            <person name="Davies R.M."/>
            <person name="Devlin K."/>
            <person name="Feltwell T."/>
            <person name="Gentles S."/>
            <person name="Hamlin N."/>
            <person name="Holroyd S."/>
            <person name="Hornsby T."/>
            <person name="Jagels K."/>
            <person name="Krogh A."/>
            <person name="McLean J."/>
            <person name="Moule S."/>
            <person name="Murphy L.D."/>
            <person name="Oliver S."/>
            <person name="Osborne J."/>
            <person name="Quail M.A."/>
            <person name="Rajandream M.A."/>
            <person name="Rogers J."/>
            <person name="Rutter S."/>
            <person name="Seeger K."/>
            <person name="Skelton S."/>
            <person name="Squares S."/>
            <person name="Squares R."/>
            <person name="Sulston J.E."/>
            <person name="Taylor K."/>
            <person name="Whitehead S."/>
            <person name="Barrell B.G."/>
        </authorList>
    </citation>
    <scope>NUCLEOTIDE SEQUENCE [LARGE SCALE GENOMIC DNA]</scope>
    <source>
        <strain>ATCC 25618 / H37Rv</strain>
    </source>
</reference>
<reference key="3">
    <citation type="journal article" date="2011" name="Mol. Cell. Proteomics">
        <title>Proteogenomic analysis of Mycobacterium tuberculosis by high resolution mass spectrometry.</title>
        <authorList>
            <person name="Kelkar D.S."/>
            <person name="Kumar D."/>
            <person name="Kumar P."/>
            <person name="Balakrishnan L."/>
            <person name="Muthusamy B."/>
            <person name="Yadav A.K."/>
            <person name="Shrivastava P."/>
            <person name="Marimuthu A."/>
            <person name="Anand S."/>
            <person name="Sundaram H."/>
            <person name="Kingsbury R."/>
            <person name="Harsha H.C."/>
            <person name="Nair B."/>
            <person name="Prasad T.S."/>
            <person name="Chauhan D.S."/>
            <person name="Katoch K."/>
            <person name="Katoch V.M."/>
            <person name="Kumar P."/>
            <person name="Chaerkady R."/>
            <person name="Ramachandran S."/>
            <person name="Dash D."/>
            <person name="Pandey A."/>
        </authorList>
    </citation>
    <scope>IDENTIFICATION BY MASS SPECTROMETRY [LARGE SCALE ANALYSIS]</scope>
    <source>
        <strain>ATCC 25618 / H37Rv</strain>
    </source>
</reference>
<feature type="chain" id="PRO_0000151728" description="Riboflavin biosynthesis protein RibBA">
    <location>
        <begin position="1"/>
        <end position="425"/>
    </location>
</feature>
<feature type="region of interest" description="DHBP synthase">
    <location>
        <begin position="1"/>
        <end position="204"/>
    </location>
</feature>
<feature type="region of interest" description="GTP cyclohydrolase II">
    <location>
        <begin position="205"/>
        <end position="425"/>
    </location>
</feature>
<feature type="active site" description="Proton acceptor; for GTP cyclohydrolase activity" evidence="1">
    <location>
        <position position="337"/>
    </location>
</feature>
<feature type="active site" description="Nucleophile; for GTP cyclohydrolase activity" evidence="1">
    <location>
        <position position="339"/>
    </location>
</feature>
<feature type="binding site" evidence="1">
    <location>
        <begin position="28"/>
        <end position="29"/>
    </location>
    <ligand>
        <name>D-ribulose 5-phosphate</name>
        <dbReference type="ChEBI" id="CHEBI:58121"/>
    </ligand>
</feature>
<feature type="binding site" evidence="1">
    <location>
        <position position="29"/>
    </location>
    <ligand>
        <name>Mg(2+)</name>
        <dbReference type="ChEBI" id="CHEBI:18420"/>
        <label>1</label>
    </ligand>
</feature>
<feature type="binding site" evidence="1">
    <location>
        <position position="29"/>
    </location>
    <ligand>
        <name>Mg(2+)</name>
        <dbReference type="ChEBI" id="CHEBI:18420"/>
        <label>2</label>
    </ligand>
</feature>
<feature type="binding site" evidence="1">
    <location>
        <position position="33"/>
    </location>
    <ligand>
        <name>D-ribulose 5-phosphate</name>
        <dbReference type="ChEBI" id="CHEBI:58121"/>
    </ligand>
</feature>
<feature type="binding site" evidence="1">
    <location>
        <begin position="141"/>
        <end position="145"/>
    </location>
    <ligand>
        <name>D-ribulose 5-phosphate</name>
        <dbReference type="ChEBI" id="CHEBI:58121"/>
    </ligand>
</feature>
<feature type="binding site" evidence="1">
    <location>
        <position position="144"/>
    </location>
    <ligand>
        <name>Mg(2+)</name>
        <dbReference type="ChEBI" id="CHEBI:18420"/>
        <label>2</label>
    </ligand>
</feature>
<feature type="binding site" evidence="1">
    <location>
        <position position="165"/>
    </location>
    <ligand>
        <name>D-ribulose 5-phosphate</name>
        <dbReference type="ChEBI" id="CHEBI:58121"/>
    </ligand>
</feature>
<feature type="binding site" evidence="1">
    <location>
        <begin position="259"/>
        <end position="263"/>
    </location>
    <ligand>
        <name>GTP</name>
        <dbReference type="ChEBI" id="CHEBI:37565"/>
    </ligand>
</feature>
<feature type="binding site" evidence="1">
    <location>
        <position position="264"/>
    </location>
    <ligand>
        <name>Zn(2+)</name>
        <dbReference type="ChEBI" id="CHEBI:29105"/>
        <note>catalytic</note>
    </ligand>
</feature>
<feature type="binding site" evidence="1">
    <location>
        <position position="275"/>
    </location>
    <ligand>
        <name>Zn(2+)</name>
        <dbReference type="ChEBI" id="CHEBI:29105"/>
        <note>catalytic</note>
    </ligand>
</feature>
<feature type="binding site" evidence="1">
    <location>
        <position position="277"/>
    </location>
    <ligand>
        <name>Zn(2+)</name>
        <dbReference type="ChEBI" id="CHEBI:29105"/>
        <note>catalytic</note>
    </ligand>
</feature>
<feature type="binding site" evidence="1">
    <location>
        <position position="280"/>
    </location>
    <ligand>
        <name>GTP</name>
        <dbReference type="ChEBI" id="CHEBI:37565"/>
    </ligand>
</feature>
<feature type="binding site" evidence="1">
    <location>
        <begin position="303"/>
        <end position="305"/>
    </location>
    <ligand>
        <name>GTP</name>
        <dbReference type="ChEBI" id="CHEBI:37565"/>
    </ligand>
</feature>
<feature type="binding site" evidence="1">
    <location>
        <position position="325"/>
    </location>
    <ligand>
        <name>GTP</name>
        <dbReference type="ChEBI" id="CHEBI:37565"/>
    </ligand>
</feature>
<feature type="binding site" evidence="1">
    <location>
        <position position="360"/>
    </location>
    <ligand>
        <name>GTP</name>
        <dbReference type="ChEBI" id="CHEBI:37565"/>
    </ligand>
</feature>
<feature type="binding site" evidence="1">
    <location>
        <position position="365"/>
    </location>
    <ligand>
        <name>GTP</name>
        <dbReference type="ChEBI" id="CHEBI:37565"/>
    </ligand>
</feature>
<feature type="site" description="Essential for DHBP synthase activity" evidence="1">
    <location>
        <position position="127"/>
    </location>
</feature>
<feature type="site" description="Essential for DHBP synthase activity" evidence="1">
    <location>
        <position position="165"/>
    </location>
</feature>
<feature type="sequence conflict" description="In Ref. 1; AAB60877." evidence="2" ref="1">
    <original>A</original>
    <variation>P</variation>
    <location>
        <position position="38"/>
    </location>
</feature>
<feature type="sequence conflict" description="In Ref. 1; AAB60877." evidence="2" ref="1">
    <original>C</original>
    <variation>S</variation>
    <location>
        <position position="66"/>
    </location>
</feature>
<feature type="sequence conflict" description="In Ref. 1; AAB60877." evidence="2" ref="1">
    <original>L</original>
    <variation>F</variation>
    <location>
        <position position="72"/>
    </location>
</feature>
<feature type="sequence conflict" description="In Ref. 1; AAB60877." evidence="2" ref="1">
    <original>MR</original>
    <variation>IG</variation>
    <location>
        <begin position="109"/>
        <end position="110"/>
    </location>
</feature>
<feature type="sequence conflict" description="In Ref. 1; AAB60877." evidence="2" ref="1">
    <original>A</original>
    <variation>S</variation>
    <location>
        <position position="119"/>
    </location>
</feature>
<feature type="sequence conflict" description="In Ref. 1; AAB60877." evidence="2" ref="1">
    <original>R</original>
    <variation>P</variation>
    <location>
        <position position="124"/>
    </location>
</feature>
<feature type="sequence conflict" description="In Ref. 1; AAB60877." evidence="2" ref="1">
    <original>AA</original>
    <variation>TP</variation>
    <location>
        <begin position="147"/>
        <end position="148"/>
    </location>
</feature>
<feature type="sequence conflict" description="In Ref. 1; AAB60877." evidence="2" ref="1">
    <original>A</original>
    <variation>S</variation>
    <location>
        <position position="152"/>
    </location>
</feature>
<feature type="sequence conflict" description="In Ref. 1; AAB60877." evidence="2" ref="1">
    <original>E</original>
    <variation>G</variation>
    <location>
        <position position="378"/>
    </location>
</feature>
<feature type="sequence conflict" description="In Ref. 1; AAB60877." evidence="2" ref="1">
    <original>Y</original>
    <variation>C</variation>
    <location>
        <position position="393"/>
    </location>
</feature>
<protein>
    <recommendedName>
        <fullName evidence="1">Riboflavin biosynthesis protein RibBA</fullName>
    </recommendedName>
    <domain>
        <recommendedName>
            <fullName evidence="1">3,4-dihydroxy-2-butanone 4-phosphate synthase</fullName>
            <shortName evidence="1">DHBP synthase</shortName>
            <ecNumber evidence="1">4.1.99.12</ecNumber>
        </recommendedName>
    </domain>
    <domain>
        <recommendedName>
            <fullName evidence="1">GTP cyclohydrolase-2</fullName>
            <ecNumber evidence="1">3.5.4.25</ecNumber>
        </recommendedName>
        <alternativeName>
            <fullName evidence="1">GTP cyclohydrolase II</fullName>
        </alternativeName>
    </domain>
</protein>
<dbReference type="EC" id="4.1.99.12" evidence="1"/>
<dbReference type="EC" id="3.5.4.25" evidence="1"/>
<dbReference type="EMBL" id="AF001929">
    <property type="protein sequence ID" value="AAB60877.1"/>
    <property type="molecule type" value="Genomic_DNA"/>
</dbReference>
<dbReference type="EMBL" id="AL123456">
    <property type="protein sequence ID" value="CCP44174.1"/>
    <property type="molecule type" value="Genomic_DNA"/>
</dbReference>
<dbReference type="PIR" id="D70902">
    <property type="entry name" value="D70902"/>
</dbReference>
<dbReference type="RefSeq" id="NP_215931.1">
    <property type="nucleotide sequence ID" value="NC_000962.3"/>
</dbReference>
<dbReference type="RefSeq" id="WP_003407334.1">
    <property type="nucleotide sequence ID" value="NZ_NVQJ01000038.1"/>
</dbReference>
<dbReference type="SMR" id="P9WHF1"/>
<dbReference type="FunCoup" id="P9WHF1">
    <property type="interactions" value="236"/>
</dbReference>
<dbReference type="STRING" id="83332.Rv1415"/>
<dbReference type="PaxDb" id="83332-Rv1415"/>
<dbReference type="DNASU" id="886694"/>
<dbReference type="GeneID" id="886694"/>
<dbReference type="KEGG" id="mtu:Rv1415"/>
<dbReference type="KEGG" id="mtv:RVBD_1415"/>
<dbReference type="TubercuList" id="Rv1415"/>
<dbReference type="eggNOG" id="COG0108">
    <property type="taxonomic scope" value="Bacteria"/>
</dbReference>
<dbReference type="eggNOG" id="COG0807">
    <property type="taxonomic scope" value="Bacteria"/>
</dbReference>
<dbReference type="InParanoid" id="P9WHF1"/>
<dbReference type="OrthoDB" id="9793111at2"/>
<dbReference type="PhylomeDB" id="P9WHF1"/>
<dbReference type="BRENDA" id="3.5.4.25">
    <property type="organism ID" value="3445"/>
</dbReference>
<dbReference type="UniPathway" id="UPA00275">
    <property type="reaction ID" value="UER00399"/>
</dbReference>
<dbReference type="UniPathway" id="UPA00275">
    <property type="reaction ID" value="UER00400"/>
</dbReference>
<dbReference type="Proteomes" id="UP000001584">
    <property type="component" value="Chromosome"/>
</dbReference>
<dbReference type="GO" id="GO:0005829">
    <property type="term" value="C:cytosol"/>
    <property type="evidence" value="ECO:0000318"/>
    <property type="project" value="GO_Central"/>
</dbReference>
<dbReference type="GO" id="GO:0005576">
    <property type="term" value="C:extracellular region"/>
    <property type="evidence" value="ECO:0007005"/>
    <property type="project" value="MTBBASE"/>
</dbReference>
<dbReference type="GO" id="GO:0008686">
    <property type="term" value="F:3,4-dihydroxy-2-butanone-4-phosphate synthase activity"/>
    <property type="evidence" value="ECO:0007669"/>
    <property type="project" value="UniProtKB-UniRule"/>
</dbReference>
<dbReference type="GO" id="GO:0005525">
    <property type="term" value="F:GTP binding"/>
    <property type="evidence" value="ECO:0007669"/>
    <property type="project" value="UniProtKB-KW"/>
</dbReference>
<dbReference type="GO" id="GO:0003935">
    <property type="term" value="F:GTP cyclohydrolase II activity"/>
    <property type="evidence" value="ECO:0000318"/>
    <property type="project" value="GO_Central"/>
</dbReference>
<dbReference type="GO" id="GO:0000287">
    <property type="term" value="F:magnesium ion binding"/>
    <property type="evidence" value="ECO:0007669"/>
    <property type="project" value="UniProtKB-UniRule"/>
</dbReference>
<dbReference type="GO" id="GO:0030145">
    <property type="term" value="F:manganese ion binding"/>
    <property type="evidence" value="ECO:0007669"/>
    <property type="project" value="UniProtKB-UniRule"/>
</dbReference>
<dbReference type="GO" id="GO:0008270">
    <property type="term" value="F:zinc ion binding"/>
    <property type="evidence" value="ECO:0007669"/>
    <property type="project" value="UniProtKB-UniRule"/>
</dbReference>
<dbReference type="GO" id="GO:0009231">
    <property type="term" value="P:riboflavin biosynthetic process"/>
    <property type="evidence" value="ECO:0000318"/>
    <property type="project" value="GO_Central"/>
</dbReference>
<dbReference type="CDD" id="cd00641">
    <property type="entry name" value="GTP_cyclohydro2"/>
    <property type="match status" value="1"/>
</dbReference>
<dbReference type="FunFam" id="3.40.50.10990:FF:000001">
    <property type="entry name" value="Riboflavin biosynthesis protein RibBA"/>
    <property type="match status" value="1"/>
</dbReference>
<dbReference type="FunFam" id="3.90.870.10:FF:000001">
    <property type="entry name" value="Riboflavin biosynthesis protein RibBA"/>
    <property type="match status" value="1"/>
</dbReference>
<dbReference type="Gene3D" id="3.90.870.10">
    <property type="entry name" value="DHBP synthase"/>
    <property type="match status" value="1"/>
</dbReference>
<dbReference type="Gene3D" id="3.40.50.10990">
    <property type="entry name" value="GTP cyclohydrolase II"/>
    <property type="match status" value="1"/>
</dbReference>
<dbReference type="HAMAP" id="MF_00179">
    <property type="entry name" value="RibA"/>
    <property type="match status" value="1"/>
</dbReference>
<dbReference type="HAMAP" id="MF_00180">
    <property type="entry name" value="RibB"/>
    <property type="match status" value="1"/>
</dbReference>
<dbReference type="HAMAP" id="MF_01283">
    <property type="entry name" value="RibBA"/>
    <property type="match status" value="1"/>
</dbReference>
<dbReference type="InterPro" id="IPR017945">
    <property type="entry name" value="DHBP_synth_RibB-like_a/b_dom"/>
</dbReference>
<dbReference type="InterPro" id="IPR000422">
    <property type="entry name" value="DHBP_synthase_RibB"/>
</dbReference>
<dbReference type="InterPro" id="IPR032677">
    <property type="entry name" value="GTP_cyclohydro_II"/>
</dbReference>
<dbReference type="InterPro" id="IPR000926">
    <property type="entry name" value="RibA"/>
</dbReference>
<dbReference type="InterPro" id="IPR036144">
    <property type="entry name" value="RibA-like_sf"/>
</dbReference>
<dbReference type="InterPro" id="IPR016299">
    <property type="entry name" value="Riboflavin_synth_RibBA"/>
</dbReference>
<dbReference type="NCBIfam" id="NF001591">
    <property type="entry name" value="PRK00393.1"/>
    <property type="match status" value="1"/>
</dbReference>
<dbReference type="NCBIfam" id="NF006803">
    <property type="entry name" value="PRK09311.1"/>
    <property type="match status" value="1"/>
</dbReference>
<dbReference type="NCBIfam" id="TIGR00505">
    <property type="entry name" value="ribA"/>
    <property type="match status" value="1"/>
</dbReference>
<dbReference type="NCBIfam" id="TIGR00506">
    <property type="entry name" value="ribB"/>
    <property type="match status" value="1"/>
</dbReference>
<dbReference type="PANTHER" id="PTHR21327:SF18">
    <property type="entry name" value="3,4-DIHYDROXY-2-BUTANONE 4-PHOSPHATE SYNTHASE"/>
    <property type="match status" value="1"/>
</dbReference>
<dbReference type="PANTHER" id="PTHR21327">
    <property type="entry name" value="GTP CYCLOHYDROLASE II-RELATED"/>
    <property type="match status" value="1"/>
</dbReference>
<dbReference type="Pfam" id="PF00926">
    <property type="entry name" value="DHBP_synthase"/>
    <property type="match status" value="1"/>
</dbReference>
<dbReference type="Pfam" id="PF00925">
    <property type="entry name" value="GTP_cyclohydro2"/>
    <property type="match status" value="1"/>
</dbReference>
<dbReference type="PIRSF" id="PIRSF001259">
    <property type="entry name" value="RibA"/>
    <property type="match status" value="1"/>
</dbReference>
<dbReference type="SUPFAM" id="SSF142695">
    <property type="entry name" value="RibA-like"/>
    <property type="match status" value="1"/>
</dbReference>
<dbReference type="SUPFAM" id="SSF55821">
    <property type="entry name" value="YrdC/RibB"/>
    <property type="match status" value="1"/>
</dbReference>
<name>RIBBA_MYCTU</name>